<comment type="function">
    <text evidence="1">Catalyzes the transfer of phosphatidylinositol and phosphatidylcholine between membranes (in vitro) (By similarity). Binds calcium ions.</text>
</comment>
<comment type="subunit">
    <text evidence="5">Interacts with PTK2B via its C-terminus.</text>
</comment>
<comment type="interaction">
    <interactant intactId="EBI-2815766">
        <id>Q9BZ71</id>
    </interactant>
    <interactant intactId="EBI-711240">
        <id>P55774</id>
        <label>CCL18</label>
    </interactant>
    <organismsDiffer>false</organismsDiffer>
    <experiments>4</experiments>
</comment>
<comment type="subcellular location">
    <subcellularLocation>
        <location evidence="11">Endomembrane system</location>
        <topology evidence="11">Peripheral membrane protein</topology>
    </subcellularLocation>
</comment>
<comment type="alternative products">
    <event type="alternative splicing"/>
    <isoform>
        <id>Q9BZ71-1</id>
        <name>1</name>
        <sequence type="displayed"/>
    </isoform>
    <isoform>
        <id>Q9BZ71-2</id>
        <name>2</name>
        <sequence type="described" ref="VSP_017965"/>
    </isoform>
    <isoform>
        <id>Q9BZ71-3</id>
        <name>3</name>
        <sequence type="described" ref="VSP_046060"/>
    </isoform>
</comment>
<comment type="tissue specificity">
    <text evidence="5">Detected in brain and spleen, and at low levels in ovary.</text>
</comment>
<comment type="disease" evidence="7">
    <disease id="DI-00320">
        <name>Cone-rod dystrophy 5</name>
        <acronym>CORD5</acronym>
        <description>An inherited retinal dystrophy characterized by retinal pigment deposits visible on fundus examination, predominantly in the macular region, and initial loss of cone photoreceptors followed by rod degeneration. This leads to decreased visual acuity and sensitivity in the central visual field, followed by loss of peripheral vision. Severe loss of vision occurs earlier than in retinitis pigmentosa, due to cone photoreceptors degenerating at a higher rate than rod photoreceptors.</description>
        <dbReference type="MIM" id="600977"/>
    </disease>
    <text>The disease is caused by variants affecting the gene represented in this entry.</text>
</comment>
<comment type="miscellaneous">
    <molecule>Isoform 2</molecule>
    <text evidence="11">May be due to an intron retention.</text>
</comment>
<comment type="similarity">
    <text evidence="11">Belongs to the PtdIns transfer protein family. PI transfer class IIA subfamily.</text>
</comment>
<comment type="sequence caution" evidence="11">
    <conflict type="erroneous initiation">
        <sequence resource="EMBL-CDS" id="BAD92367"/>
    </conflict>
</comment>
<accession>Q9BZ71</accession>
<accession>A1A5D0</accession>
<accession>F8WEW5</accession>
<accession>Q59GH9</accession>
<accession>Q9NPQ4</accession>
<feature type="chain" id="PRO_0000232743" description="Membrane-associated phosphatidylinositol transfer protein 3">
    <location>
        <begin position="1"/>
        <end position="974"/>
    </location>
</feature>
<feature type="domain" description="DDHD" evidence="3">
    <location>
        <begin position="390"/>
        <end position="594"/>
    </location>
</feature>
<feature type="region of interest" description="Disordered" evidence="4">
    <location>
        <begin position="284"/>
        <end position="304"/>
    </location>
</feature>
<feature type="region of interest" description="Disordered" evidence="4">
    <location>
        <begin position="323"/>
        <end position="346"/>
    </location>
</feature>
<feature type="region of interest" description="Disordered" evidence="4">
    <location>
        <begin position="491"/>
        <end position="536"/>
    </location>
</feature>
<feature type="region of interest" description="Disordered" evidence="4">
    <location>
        <begin position="927"/>
        <end position="974"/>
    </location>
</feature>
<feature type="compositionally biased region" description="Polar residues" evidence="4">
    <location>
        <begin position="292"/>
        <end position="302"/>
    </location>
</feature>
<feature type="compositionally biased region" description="Low complexity" evidence="4">
    <location>
        <begin position="520"/>
        <end position="533"/>
    </location>
</feature>
<feature type="modified residue" description="Phosphoserine" evidence="12">
    <location>
        <position position="30"/>
    </location>
</feature>
<feature type="modified residue" description="Phosphoserine" evidence="12">
    <location>
        <position position="31"/>
    </location>
</feature>
<feature type="modified residue" description="Phosphoserine" evidence="2">
    <location>
        <position position="109"/>
    </location>
</feature>
<feature type="modified residue" description="Phosphoserine" evidence="2">
    <location>
        <position position="295"/>
    </location>
</feature>
<feature type="modified residue" description="Phosphoserine" evidence="2">
    <location>
        <position position="298"/>
    </location>
</feature>
<feature type="modified residue" description="Phosphoserine" evidence="13">
    <location>
        <position position="321"/>
    </location>
</feature>
<feature type="modified residue" description="Phosphoserine" evidence="14">
    <location>
        <position position="343"/>
    </location>
</feature>
<feature type="modified residue" description="Phosphoserine" evidence="2">
    <location>
        <position position="495"/>
    </location>
</feature>
<feature type="modified residue" description="Phosphoserine" evidence="13">
    <location>
        <position position="612"/>
    </location>
</feature>
<feature type="modified residue" description="Phosphoserine" evidence="13">
    <location>
        <position position="907"/>
    </location>
</feature>
<feature type="modified residue" description="Phosphoserine" evidence="12 14">
    <location>
        <position position="928"/>
    </location>
</feature>
<feature type="modified residue" description="Phosphoserine" evidence="13">
    <location>
        <position position="946"/>
    </location>
</feature>
<feature type="splice variant" id="VSP_017965" description="In isoform 2." evidence="10">
    <location>
        <begin position="1"/>
        <end position="409"/>
    </location>
</feature>
<feature type="splice variant" id="VSP_046060" description="In isoform 3." evidence="9">
    <location>
        <begin position="40"/>
        <end position="75"/>
    </location>
</feature>
<feature type="sequence variant" id="VAR_062132" description="In dbSNP:rs28493751.">
    <original>P</original>
    <variation>S</variation>
    <location>
        <position position="17"/>
    </location>
</feature>
<feature type="sequence variant" id="VAR_026014" description="In dbSNP:rs3809835." evidence="6 8">
    <original>A</original>
    <variation>T</variation>
    <location>
        <position position="80"/>
    </location>
</feature>
<feature type="sequence variant" id="VAR_046787" description="In CORD5; dbSNP:rs76024428." evidence="7">
    <original>Q</original>
    <variation>H</variation>
    <location>
        <position position="626"/>
    </location>
</feature>
<feature type="sequence conflict" description="In Ref. 1; AAK01446." evidence="11" ref="1">
    <original>A</original>
    <variation>V</variation>
    <location>
        <position position="885"/>
    </location>
</feature>
<keyword id="KW-0025">Alternative splicing</keyword>
<keyword id="KW-0106">Calcium</keyword>
<keyword id="KW-0182">Cone-rod dystrophy</keyword>
<keyword id="KW-0225">Disease variant</keyword>
<keyword id="KW-0446">Lipid-binding</keyword>
<keyword id="KW-0472">Membrane</keyword>
<keyword id="KW-0479">Metal-binding</keyword>
<keyword id="KW-0597">Phosphoprotein</keyword>
<keyword id="KW-1267">Proteomics identification</keyword>
<keyword id="KW-1185">Reference proteome</keyword>
<proteinExistence type="evidence at protein level"/>
<sequence length="974" mass="106781">MAKAGRAGGPPPGGGAPWHLRNVLSDSVESSDDEFFDAREEMAEGKNAILIGMSQWNSNDLVEQIETMGKLDEHQGEGTAPCTSSILQEKQRELYRVSLRRQRFPAQGSIEIHEDSEEGCPQRSCKTHVLLLVLHGGNILDTGAGDPSCKAADIHTFSSVLEKVTRAHFPAALGHILIKFVPCPAICSEAFSLVSHLNPYSHDEGCLSSSQDHVPLAALPLLAISSPQYQDAVATVIERANQVYREFLKSSDGIGFSGQVCLIGDCVGGLLAFDAICYSAGPSGDSPASSSRKGSISSTQDTPVAVEEDCSLASSKRLSKSNIDISSGLEDEEPKRPLPRKQSDSSTYDCEAITQHHAFLSSIHSSVLKDESETPAAGGPQLPEVSLGRFDFDVSDFFLFGSPLGLVLAMRRTVLPGLDGFQVRPACSQVYSFFHCADPSASRLEPLLEPKFHLVPPVSVPRYQRFPLGDGQSLLLADALHTHSPLFLEGSSRDSPPLLDAPASPPQASRFQRPGRRMSEGSSHSESSESSDSMAPVGASRITAKWWGSKRIDYALYCPDVLTAFPTVALPHLFHASYWESTDVVAFILRQVMRYESVNIKESARLDPAALSPANPREKWLRKRTQVKLRNVTANHRANDVIAAEDGPQVLVGRFMYGPLDMVALTGEKVDILVMAEPSSGRWVHLDTEITNSSGRITYNVPRPRRLGVGVYPVKMVVRGDQTCAMSYLTVLPRGMECVVFSIDGSFAASVSIMGSDPKVRPGAVDVVRHWQDLGYMILYITGRPDMQKQRVVSWLSQHNFPQGMIFFSDGLVHDPLRQKAIFLRNLMQECFIKISAAYGSTKDISVYSVLGLPASQIFIVGRPTKKYQTQCQFLSEGYAAHLAALEASHRSRPKKNNSRMILRKGSFGLHAQPEFLRKRNHLRRTMSVQQPDPPAANPKPERAQSQPESDKDHERPLPALSWARGPPKFESVP</sequence>
<protein>
    <recommendedName>
        <fullName>Membrane-associated phosphatidylinositol transfer protein 3</fullName>
    </recommendedName>
    <alternativeName>
        <fullName>Phosphatidylinositol transfer protein, membrane-associated 3</fullName>
        <shortName>PITPnm 3</shortName>
    </alternativeName>
    <alternativeName>
        <fullName>Pyk2 N-terminal domain-interacting receptor 1</fullName>
        <shortName>NIR-1</shortName>
    </alternativeName>
</protein>
<dbReference type="EMBL" id="AF334586">
    <property type="protein sequence ID" value="AAK01446.1"/>
    <property type="molecule type" value="mRNA"/>
</dbReference>
<dbReference type="EMBL" id="AB209130">
    <property type="protein sequence ID" value="BAD92367.1"/>
    <property type="status" value="ALT_INIT"/>
    <property type="molecule type" value="mRNA"/>
</dbReference>
<dbReference type="EMBL" id="AC055872">
    <property type="status" value="NOT_ANNOTATED_CDS"/>
    <property type="molecule type" value="Genomic_DNA"/>
</dbReference>
<dbReference type="EMBL" id="BC035799">
    <property type="status" value="NOT_ANNOTATED_CDS"/>
    <property type="molecule type" value="mRNA"/>
</dbReference>
<dbReference type="EMBL" id="BC128584">
    <property type="protein sequence ID" value="AAI28585.1"/>
    <property type="molecule type" value="mRNA"/>
</dbReference>
<dbReference type="EMBL" id="AL389994">
    <property type="protein sequence ID" value="CAB97544.1"/>
    <property type="molecule type" value="mRNA"/>
</dbReference>
<dbReference type="CCDS" id="CCDS11076.1">
    <molecule id="Q9BZ71-1"/>
</dbReference>
<dbReference type="CCDS" id="CCDS54080.1">
    <molecule id="Q9BZ71-3"/>
</dbReference>
<dbReference type="RefSeq" id="NP_001159438.1">
    <molecule id="Q9BZ71-3"/>
    <property type="nucleotide sequence ID" value="NM_001165966.2"/>
</dbReference>
<dbReference type="RefSeq" id="NP_112497.2">
    <molecule id="Q9BZ71-1"/>
    <property type="nucleotide sequence ID" value="NM_031220.4"/>
</dbReference>
<dbReference type="BioGRID" id="123636">
    <property type="interactions" value="14"/>
</dbReference>
<dbReference type="CORUM" id="Q9BZ71"/>
<dbReference type="ELM" id="Q9BZ71"/>
<dbReference type="FunCoup" id="Q9BZ71">
    <property type="interactions" value="843"/>
</dbReference>
<dbReference type="IntAct" id="Q9BZ71">
    <property type="interactions" value="11"/>
</dbReference>
<dbReference type="MINT" id="Q9BZ71"/>
<dbReference type="STRING" id="9606.ENSP00000262483"/>
<dbReference type="GlyGen" id="Q9BZ71">
    <property type="glycosylation" value="3 sites, 1 O-linked glycan (3 sites)"/>
</dbReference>
<dbReference type="iPTMnet" id="Q9BZ71"/>
<dbReference type="PhosphoSitePlus" id="Q9BZ71"/>
<dbReference type="SwissPalm" id="Q9BZ71"/>
<dbReference type="BioMuta" id="PITPNM3"/>
<dbReference type="DMDM" id="93140544"/>
<dbReference type="jPOST" id="Q9BZ71"/>
<dbReference type="MassIVE" id="Q9BZ71"/>
<dbReference type="PaxDb" id="9606-ENSP00000262483"/>
<dbReference type="PeptideAtlas" id="Q9BZ71"/>
<dbReference type="ProteomicsDB" id="31981"/>
<dbReference type="ProteomicsDB" id="79771">
    <molecule id="Q9BZ71-1"/>
</dbReference>
<dbReference type="ProteomicsDB" id="79772">
    <molecule id="Q9BZ71-2"/>
</dbReference>
<dbReference type="Antibodypedia" id="23792">
    <property type="antibodies" value="114 antibodies from 26 providers"/>
</dbReference>
<dbReference type="DNASU" id="83394"/>
<dbReference type="Ensembl" id="ENST00000262483.13">
    <molecule id="Q9BZ71-1"/>
    <property type="protein sequence ID" value="ENSP00000262483.8"/>
    <property type="gene ID" value="ENSG00000091622.16"/>
</dbReference>
<dbReference type="Ensembl" id="ENST00000421306.7">
    <molecule id="Q9BZ71-3"/>
    <property type="protein sequence ID" value="ENSP00000407882.3"/>
    <property type="gene ID" value="ENSG00000091622.16"/>
</dbReference>
<dbReference type="GeneID" id="83394"/>
<dbReference type="KEGG" id="hsa:83394"/>
<dbReference type="MANE-Select" id="ENST00000262483.13">
    <property type="protein sequence ID" value="ENSP00000262483.8"/>
    <property type="RefSeq nucleotide sequence ID" value="NM_031220.4"/>
    <property type="RefSeq protein sequence ID" value="NP_112497.2"/>
</dbReference>
<dbReference type="UCSC" id="uc002gdd.5">
    <molecule id="Q9BZ71-1"/>
    <property type="organism name" value="human"/>
</dbReference>
<dbReference type="AGR" id="HGNC:21043"/>
<dbReference type="CTD" id="83394"/>
<dbReference type="DisGeNET" id="83394"/>
<dbReference type="GeneCards" id="PITPNM3"/>
<dbReference type="HGNC" id="HGNC:21043">
    <property type="gene designation" value="PITPNM3"/>
</dbReference>
<dbReference type="HPA" id="ENSG00000091622">
    <property type="expression patterns" value="Tissue enhanced (brain, lymphoid tissue)"/>
</dbReference>
<dbReference type="MalaCards" id="PITPNM3"/>
<dbReference type="MIM" id="600977">
    <property type="type" value="phenotype"/>
</dbReference>
<dbReference type="MIM" id="608921">
    <property type="type" value="gene"/>
</dbReference>
<dbReference type="neXtProt" id="NX_Q9BZ71"/>
<dbReference type="OpenTargets" id="ENSG00000091622"/>
<dbReference type="Orphanet" id="1872">
    <property type="disease" value="Cone rod dystrophy"/>
</dbReference>
<dbReference type="PharmGKB" id="PA134971883"/>
<dbReference type="VEuPathDB" id="HostDB:ENSG00000091622"/>
<dbReference type="eggNOG" id="KOG3668">
    <property type="taxonomic scope" value="Eukaryota"/>
</dbReference>
<dbReference type="GeneTree" id="ENSGT00940000153849"/>
<dbReference type="HOGENOM" id="CLU_007179_1_0_1"/>
<dbReference type="InParanoid" id="Q9BZ71"/>
<dbReference type="OMA" id="PSIVWMR"/>
<dbReference type="OrthoDB" id="10053061at2759"/>
<dbReference type="PAN-GO" id="Q9BZ71">
    <property type="GO annotations" value="3 GO annotations based on evolutionary models"/>
</dbReference>
<dbReference type="PhylomeDB" id="Q9BZ71"/>
<dbReference type="TreeFam" id="TF312967"/>
<dbReference type="PathwayCommons" id="Q9BZ71"/>
<dbReference type="Reactome" id="R-HSA-1483226">
    <property type="pathway name" value="Synthesis of PI"/>
</dbReference>
<dbReference type="SignaLink" id="Q9BZ71"/>
<dbReference type="BioGRID-ORCS" id="83394">
    <property type="hits" value="8 hits in 1150 CRISPR screens"/>
</dbReference>
<dbReference type="GenomeRNAi" id="83394"/>
<dbReference type="Pharos" id="Q9BZ71">
    <property type="development level" value="Tbio"/>
</dbReference>
<dbReference type="PRO" id="PR:Q9BZ71"/>
<dbReference type="Proteomes" id="UP000005640">
    <property type="component" value="Chromosome 17"/>
</dbReference>
<dbReference type="RNAct" id="Q9BZ71">
    <property type="molecule type" value="protein"/>
</dbReference>
<dbReference type="Bgee" id="ENSG00000091622">
    <property type="expression patterns" value="Expressed in pancreatic ductal cell and 161 other cell types or tissues"/>
</dbReference>
<dbReference type="ExpressionAtlas" id="Q9BZ71">
    <property type="expression patterns" value="baseline and differential"/>
</dbReference>
<dbReference type="GO" id="GO:0044297">
    <property type="term" value="C:cell body"/>
    <property type="evidence" value="ECO:0007669"/>
    <property type="project" value="Ensembl"/>
</dbReference>
<dbReference type="GO" id="GO:0042995">
    <property type="term" value="C:cell projection"/>
    <property type="evidence" value="ECO:0007669"/>
    <property type="project" value="Ensembl"/>
</dbReference>
<dbReference type="GO" id="GO:0005737">
    <property type="term" value="C:cytoplasm"/>
    <property type="evidence" value="ECO:0000318"/>
    <property type="project" value="GO_Central"/>
</dbReference>
<dbReference type="GO" id="GO:0005829">
    <property type="term" value="C:cytosol"/>
    <property type="evidence" value="ECO:0000304"/>
    <property type="project" value="Reactome"/>
</dbReference>
<dbReference type="GO" id="GO:0012505">
    <property type="term" value="C:endomembrane system"/>
    <property type="evidence" value="ECO:0007669"/>
    <property type="project" value="UniProtKB-SubCell"/>
</dbReference>
<dbReference type="GO" id="GO:0016020">
    <property type="term" value="C:membrane"/>
    <property type="evidence" value="ECO:0007669"/>
    <property type="project" value="UniProtKB-KW"/>
</dbReference>
<dbReference type="GO" id="GO:0005509">
    <property type="term" value="F:calcium ion binding"/>
    <property type="evidence" value="ECO:0000314"/>
    <property type="project" value="UniProtKB"/>
</dbReference>
<dbReference type="GO" id="GO:0008289">
    <property type="term" value="F:lipid binding"/>
    <property type="evidence" value="ECO:0007669"/>
    <property type="project" value="UniProtKB-KW"/>
</dbReference>
<dbReference type="GO" id="GO:0008526">
    <property type="term" value="F:phosphatidylinositol transfer activity"/>
    <property type="evidence" value="ECO:0000304"/>
    <property type="project" value="Reactome"/>
</dbReference>
<dbReference type="GO" id="GO:0004620">
    <property type="term" value="F:phospholipase activity"/>
    <property type="evidence" value="ECO:0000318"/>
    <property type="project" value="GO_Central"/>
</dbReference>
<dbReference type="GO" id="GO:0030971">
    <property type="term" value="F:receptor tyrosine kinase binding"/>
    <property type="evidence" value="ECO:0000315"/>
    <property type="project" value="UniProtKB"/>
</dbReference>
<dbReference type="GO" id="GO:0006661">
    <property type="term" value="P:phosphatidylinositol biosynthetic process"/>
    <property type="evidence" value="ECO:0000304"/>
    <property type="project" value="Reactome"/>
</dbReference>
<dbReference type="FunFam" id="3.40.50.1000:FF:000085">
    <property type="entry name" value="Membrane-associated phosphatidylinositol transfer protein 3"/>
    <property type="match status" value="1"/>
</dbReference>
<dbReference type="Gene3D" id="3.40.50.1000">
    <property type="entry name" value="HAD superfamily/HAD-like"/>
    <property type="match status" value="1"/>
</dbReference>
<dbReference type="InterPro" id="IPR004177">
    <property type="entry name" value="DDHD_dom"/>
</dbReference>
<dbReference type="InterPro" id="IPR036412">
    <property type="entry name" value="HAD-like_sf"/>
</dbReference>
<dbReference type="InterPro" id="IPR023214">
    <property type="entry name" value="HAD_sf"/>
</dbReference>
<dbReference type="InterPro" id="IPR031315">
    <property type="entry name" value="LNS2/PITP"/>
</dbReference>
<dbReference type="InterPro" id="IPR001666">
    <property type="entry name" value="PI_transfer"/>
</dbReference>
<dbReference type="PANTHER" id="PTHR10658">
    <property type="entry name" value="PHOSPHATIDYLINOSITOL TRANSFER PROTEIN"/>
    <property type="match status" value="1"/>
</dbReference>
<dbReference type="PANTHER" id="PTHR10658:SF27">
    <property type="entry name" value="PHOSPHATIDYLINOSITOL TRANSFER PROTEIN BETA ISOFORM"/>
    <property type="match status" value="1"/>
</dbReference>
<dbReference type="Pfam" id="PF02862">
    <property type="entry name" value="DDHD"/>
    <property type="match status" value="1"/>
</dbReference>
<dbReference type="Pfam" id="PF24694">
    <property type="entry name" value="LNS2_PITM1-3"/>
    <property type="match status" value="1"/>
</dbReference>
<dbReference type="Pfam" id="PF24695">
    <property type="entry name" value="PITM1-3"/>
    <property type="match status" value="1"/>
</dbReference>
<dbReference type="SMART" id="SM01127">
    <property type="entry name" value="DDHD"/>
    <property type="match status" value="1"/>
</dbReference>
<dbReference type="SMART" id="SM00775">
    <property type="entry name" value="LNS2"/>
    <property type="match status" value="1"/>
</dbReference>
<dbReference type="SUPFAM" id="SSF56784">
    <property type="entry name" value="HAD-like"/>
    <property type="match status" value="1"/>
</dbReference>
<dbReference type="PROSITE" id="PS51043">
    <property type="entry name" value="DDHD"/>
    <property type="match status" value="1"/>
</dbReference>
<gene>
    <name type="primary">PITPNM3</name>
    <name type="synonym">NIR1</name>
</gene>
<name>PITM3_HUMAN</name>
<reference key="1">
    <citation type="journal article" date="1999" name="Mol. Cell. Biol.">
        <title>Identification of a novel family of targets of PYK2 related to Drosophila retinal degeneration B (rdgB) protein.</title>
        <authorList>
            <person name="Lev S."/>
            <person name="Hernandez J."/>
            <person name="Martinez R."/>
            <person name="Chen A."/>
            <person name="Plowman G."/>
            <person name="Schlessinger J."/>
        </authorList>
    </citation>
    <scope>NUCLEOTIDE SEQUENCE [MRNA] (ISOFORM 1)</scope>
    <scope>INTERACTION WITH PTK2B</scope>
    <scope>CALCIUM-BINDING</scope>
    <scope>TISSUE SPECIFICITY</scope>
    <source>
        <tissue>Brain</tissue>
    </source>
</reference>
<reference key="2">
    <citation type="submission" date="2005-03" db="EMBL/GenBank/DDBJ databases">
        <authorList>
            <person name="Totoki Y."/>
            <person name="Toyoda A."/>
            <person name="Takeda T."/>
            <person name="Sakaki Y."/>
            <person name="Tanaka A."/>
            <person name="Yokoyama S."/>
            <person name="Ohara O."/>
            <person name="Nagase T."/>
            <person name="Kikuno R.F."/>
        </authorList>
    </citation>
    <scope>NUCLEOTIDE SEQUENCE [LARGE SCALE MRNA] (ISOFORM 2)</scope>
    <source>
        <tissue>Brain</tissue>
    </source>
</reference>
<reference key="3">
    <citation type="journal article" date="2006" name="Nature">
        <title>DNA sequence of human chromosome 17 and analysis of rearrangement in the human lineage.</title>
        <authorList>
            <person name="Zody M.C."/>
            <person name="Garber M."/>
            <person name="Adams D.J."/>
            <person name="Sharpe T."/>
            <person name="Harrow J."/>
            <person name="Lupski J.R."/>
            <person name="Nicholson C."/>
            <person name="Searle S.M."/>
            <person name="Wilming L."/>
            <person name="Young S.K."/>
            <person name="Abouelleil A."/>
            <person name="Allen N.R."/>
            <person name="Bi W."/>
            <person name="Bloom T."/>
            <person name="Borowsky M.L."/>
            <person name="Bugalter B.E."/>
            <person name="Butler J."/>
            <person name="Chang J.L."/>
            <person name="Chen C.-K."/>
            <person name="Cook A."/>
            <person name="Corum B."/>
            <person name="Cuomo C.A."/>
            <person name="de Jong P.J."/>
            <person name="DeCaprio D."/>
            <person name="Dewar K."/>
            <person name="FitzGerald M."/>
            <person name="Gilbert J."/>
            <person name="Gibson R."/>
            <person name="Gnerre S."/>
            <person name="Goldstein S."/>
            <person name="Grafham D.V."/>
            <person name="Grocock R."/>
            <person name="Hafez N."/>
            <person name="Hagopian D.S."/>
            <person name="Hart E."/>
            <person name="Norman C.H."/>
            <person name="Humphray S."/>
            <person name="Jaffe D.B."/>
            <person name="Jones M."/>
            <person name="Kamal M."/>
            <person name="Khodiyar V.K."/>
            <person name="LaButti K."/>
            <person name="Laird G."/>
            <person name="Lehoczky J."/>
            <person name="Liu X."/>
            <person name="Lokyitsang T."/>
            <person name="Loveland J."/>
            <person name="Lui A."/>
            <person name="Macdonald P."/>
            <person name="Major J.E."/>
            <person name="Matthews L."/>
            <person name="Mauceli E."/>
            <person name="McCarroll S.A."/>
            <person name="Mihalev A.H."/>
            <person name="Mudge J."/>
            <person name="Nguyen C."/>
            <person name="Nicol R."/>
            <person name="O'Leary S.B."/>
            <person name="Osoegawa K."/>
            <person name="Schwartz D.C."/>
            <person name="Shaw-Smith C."/>
            <person name="Stankiewicz P."/>
            <person name="Steward C."/>
            <person name="Swarbreck D."/>
            <person name="Venkataraman V."/>
            <person name="Whittaker C.A."/>
            <person name="Yang X."/>
            <person name="Zimmer A.R."/>
            <person name="Bradley A."/>
            <person name="Hubbard T."/>
            <person name="Birren B.W."/>
            <person name="Rogers J."/>
            <person name="Lander E.S."/>
            <person name="Nusbaum C."/>
        </authorList>
    </citation>
    <scope>NUCLEOTIDE SEQUENCE [LARGE SCALE GENOMIC DNA]</scope>
</reference>
<reference key="4">
    <citation type="journal article" date="2004" name="Genome Res.">
        <title>The status, quality, and expansion of the NIH full-length cDNA project: the Mammalian Gene Collection (MGC).</title>
        <authorList>
            <consortium name="The MGC Project Team"/>
        </authorList>
    </citation>
    <scope>NUCLEOTIDE SEQUENCE [LARGE SCALE MRNA] (ISOFORM 1)</scope>
    <scope>NUCLEOTIDE SEQUENCE [LARGE SCALE MRNA] OF 1-954 (ISOFORM 3)</scope>
    <scope>VARIANT THR-80</scope>
    <source>
        <tissue>Hippocampus</tissue>
    </source>
</reference>
<reference key="5">
    <citation type="submission" date="2000-07" db="EMBL/GenBank/DDBJ databases">
        <authorList>
            <consortium name="The European IMAGE consortium"/>
        </authorList>
    </citation>
    <scope>NUCLEOTIDE SEQUENCE [LARGE SCALE MRNA] OF 43-954 (ISOFORM 1)</scope>
    <scope>VARIANT THR-80</scope>
</reference>
<reference key="6">
    <citation type="journal article" date="2008" name="Proc. Natl. Acad. Sci. U.S.A.">
        <title>A quantitative atlas of mitotic phosphorylation.</title>
        <authorList>
            <person name="Dephoure N."/>
            <person name="Zhou C."/>
            <person name="Villen J."/>
            <person name="Beausoleil S.A."/>
            <person name="Bakalarski C.E."/>
            <person name="Elledge S.J."/>
            <person name="Gygi S.P."/>
        </authorList>
    </citation>
    <scope>PHOSPHORYLATION [LARGE SCALE ANALYSIS] AT SER-30; SER-31 AND SER-928</scope>
    <scope>IDENTIFICATION BY MASS SPECTROMETRY [LARGE SCALE ANALYSIS]</scope>
    <source>
        <tissue>Cervix carcinoma</tissue>
    </source>
</reference>
<reference key="7">
    <citation type="journal article" date="2013" name="J. Proteome Res.">
        <title>Toward a comprehensive characterization of a human cancer cell phosphoproteome.</title>
        <authorList>
            <person name="Zhou H."/>
            <person name="Di Palma S."/>
            <person name="Preisinger C."/>
            <person name="Peng M."/>
            <person name="Polat A.N."/>
            <person name="Heck A.J."/>
            <person name="Mohammed S."/>
        </authorList>
    </citation>
    <scope>PHOSPHORYLATION [LARGE SCALE ANALYSIS] AT SER-321; SER-612; SER-907 AND SER-946</scope>
    <scope>IDENTIFICATION BY MASS SPECTROMETRY [LARGE SCALE ANALYSIS]</scope>
    <source>
        <tissue>Cervix carcinoma</tissue>
    </source>
</reference>
<reference key="8">
    <citation type="journal article" date="2014" name="J. Proteomics">
        <title>An enzyme assisted RP-RPLC approach for in-depth analysis of human liver phosphoproteome.</title>
        <authorList>
            <person name="Bian Y."/>
            <person name="Song C."/>
            <person name="Cheng K."/>
            <person name="Dong M."/>
            <person name="Wang F."/>
            <person name="Huang J."/>
            <person name="Sun D."/>
            <person name="Wang L."/>
            <person name="Ye M."/>
            <person name="Zou H."/>
        </authorList>
    </citation>
    <scope>PHOSPHORYLATION [LARGE SCALE ANALYSIS] AT SER-343 AND SER-928</scope>
    <scope>IDENTIFICATION BY MASS SPECTROMETRY [LARGE SCALE ANALYSIS]</scope>
    <source>
        <tissue>Liver</tissue>
    </source>
</reference>
<reference key="9">
    <citation type="journal article" date="2007" name="Eur. J. Hum. Genet.">
        <title>Mutation in the PYK2-binding domain of PITPNM3 causes autosomal dominant cone dystrophy (CORD5) in two Swedish families.</title>
        <authorList>
            <person name="Koehn L."/>
            <person name="Kadzhaev K."/>
            <person name="Burstedt M.S."/>
            <person name="Haraldsson S."/>
            <person name="Hallberg B."/>
            <person name="Sandgren O."/>
            <person name="Golovleva I."/>
        </authorList>
    </citation>
    <scope>VARIANT CORD5 HIS-626</scope>
</reference>
<evidence type="ECO:0000250" key="1"/>
<evidence type="ECO:0000250" key="2">
    <source>
        <dbReference type="UniProtKB" id="Q3UHE1"/>
    </source>
</evidence>
<evidence type="ECO:0000255" key="3">
    <source>
        <dbReference type="PROSITE-ProRule" id="PRU00378"/>
    </source>
</evidence>
<evidence type="ECO:0000256" key="4">
    <source>
        <dbReference type="SAM" id="MobiDB-lite"/>
    </source>
</evidence>
<evidence type="ECO:0000269" key="5">
    <source>
    </source>
</evidence>
<evidence type="ECO:0000269" key="6">
    <source>
    </source>
</evidence>
<evidence type="ECO:0000269" key="7">
    <source>
    </source>
</evidence>
<evidence type="ECO:0000269" key="8">
    <source ref="5"/>
</evidence>
<evidence type="ECO:0000303" key="9">
    <source>
    </source>
</evidence>
<evidence type="ECO:0000303" key="10">
    <source ref="2"/>
</evidence>
<evidence type="ECO:0000305" key="11"/>
<evidence type="ECO:0007744" key="12">
    <source>
    </source>
</evidence>
<evidence type="ECO:0007744" key="13">
    <source>
    </source>
</evidence>
<evidence type="ECO:0007744" key="14">
    <source>
    </source>
</evidence>
<organism>
    <name type="scientific">Homo sapiens</name>
    <name type="common">Human</name>
    <dbReference type="NCBI Taxonomy" id="9606"/>
    <lineage>
        <taxon>Eukaryota</taxon>
        <taxon>Metazoa</taxon>
        <taxon>Chordata</taxon>
        <taxon>Craniata</taxon>
        <taxon>Vertebrata</taxon>
        <taxon>Euteleostomi</taxon>
        <taxon>Mammalia</taxon>
        <taxon>Eutheria</taxon>
        <taxon>Euarchontoglires</taxon>
        <taxon>Primates</taxon>
        <taxon>Haplorrhini</taxon>
        <taxon>Catarrhini</taxon>
        <taxon>Hominidae</taxon>
        <taxon>Homo</taxon>
    </lineage>
</organism>